<name>TRPC_BACC3</name>
<keyword id="KW-0028">Amino-acid biosynthesis</keyword>
<keyword id="KW-0057">Aromatic amino acid biosynthesis</keyword>
<keyword id="KW-0210">Decarboxylase</keyword>
<keyword id="KW-0456">Lyase</keyword>
<keyword id="KW-0822">Tryptophan biosynthesis</keyword>
<feature type="chain" id="PRO_1000198766" description="Indole-3-glycerol phosphate synthase">
    <location>
        <begin position="1"/>
        <end position="253"/>
    </location>
</feature>
<sequence>MGTILDKIVDQKKKEVAALYETYTPVKEKRKTRSLVKALEQFTVIAEVKRASPSKGDINLHVDVRKQVKTYEGCGAGAVSVLTDGQFFKGSFYDLQTAREESSIPLLCKDFIIDKIQIDRAYEAGADIILLIVAALTKEKLKELYSYVLEKGLEAIVEVHDEKELEIAIQLNPHVIGINNRNLKTFEVDLSQTEKLGKRLNEEKLLWISESGIHSKEDIICVKRAGAKGVLVGEALMTSSSIHTFFEDCKVNI</sequence>
<proteinExistence type="inferred from homology"/>
<protein>
    <recommendedName>
        <fullName evidence="1">Indole-3-glycerol phosphate synthase</fullName>
        <shortName evidence="1">IGPS</shortName>
        <ecNumber evidence="1">4.1.1.48</ecNumber>
    </recommendedName>
</protein>
<reference key="1">
    <citation type="submission" date="2009-02" db="EMBL/GenBank/DDBJ databases">
        <title>Genome sequence of Bacillus cereus 03BB102.</title>
        <authorList>
            <person name="Dodson R.J."/>
            <person name="Jackson P."/>
            <person name="Munk A.C."/>
            <person name="Brettin T."/>
            <person name="Bruce D."/>
            <person name="Detter C."/>
            <person name="Tapia R."/>
            <person name="Han C."/>
            <person name="Sutton G."/>
            <person name="Sims D."/>
        </authorList>
    </citation>
    <scope>NUCLEOTIDE SEQUENCE [LARGE SCALE GENOMIC DNA]</scope>
    <source>
        <strain>03BB102</strain>
    </source>
</reference>
<organism>
    <name type="scientific">Bacillus cereus (strain 03BB102)</name>
    <dbReference type="NCBI Taxonomy" id="572264"/>
    <lineage>
        <taxon>Bacteria</taxon>
        <taxon>Bacillati</taxon>
        <taxon>Bacillota</taxon>
        <taxon>Bacilli</taxon>
        <taxon>Bacillales</taxon>
        <taxon>Bacillaceae</taxon>
        <taxon>Bacillus</taxon>
        <taxon>Bacillus cereus group</taxon>
    </lineage>
</organism>
<gene>
    <name evidence="1" type="primary">trpC</name>
    <name type="ordered locus">BCA_1280</name>
</gene>
<accession>C1ELE8</accession>
<evidence type="ECO:0000255" key="1">
    <source>
        <dbReference type="HAMAP-Rule" id="MF_00134"/>
    </source>
</evidence>
<comment type="catalytic activity">
    <reaction evidence="1">
        <text>1-(2-carboxyphenylamino)-1-deoxy-D-ribulose 5-phosphate + H(+) = (1S,2R)-1-C-(indol-3-yl)glycerol 3-phosphate + CO2 + H2O</text>
        <dbReference type="Rhea" id="RHEA:23476"/>
        <dbReference type="ChEBI" id="CHEBI:15377"/>
        <dbReference type="ChEBI" id="CHEBI:15378"/>
        <dbReference type="ChEBI" id="CHEBI:16526"/>
        <dbReference type="ChEBI" id="CHEBI:58613"/>
        <dbReference type="ChEBI" id="CHEBI:58866"/>
        <dbReference type="EC" id="4.1.1.48"/>
    </reaction>
</comment>
<comment type="pathway">
    <text evidence="1">Amino-acid biosynthesis; L-tryptophan biosynthesis; L-tryptophan from chorismate: step 4/5.</text>
</comment>
<comment type="similarity">
    <text evidence="1">Belongs to the TrpC family.</text>
</comment>
<dbReference type="EC" id="4.1.1.48" evidence="1"/>
<dbReference type="EMBL" id="CP001407">
    <property type="protein sequence ID" value="ACO27703.1"/>
    <property type="molecule type" value="Genomic_DNA"/>
</dbReference>
<dbReference type="RefSeq" id="WP_000536694.1">
    <property type="nucleotide sequence ID" value="NZ_CP009318.1"/>
</dbReference>
<dbReference type="SMR" id="C1ELE8"/>
<dbReference type="KEGG" id="bcx:BCA_1280"/>
<dbReference type="PATRIC" id="fig|572264.18.peg.1231"/>
<dbReference type="UniPathway" id="UPA00035">
    <property type="reaction ID" value="UER00043"/>
</dbReference>
<dbReference type="Proteomes" id="UP000002210">
    <property type="component" value="Chromosome"/>
</dbReference>
<dbReference type="GO" id="GO:0004425">
    <property type="term" value="F:indole-3-glycerol-phosphate synthase activity"/>
    <property type="evidence" value="ECO:0007669"/>
    <property type="project" value="UniProtKB-UniRule"/>
</dbReference>
<dbReference type="GO" id="GO:0004640">
    <property type="term" value="F:phosphoribosylanthranilate isomerase activity"/>
    <property type="evidence" value="ECO:0007669"/>
    <property type="project" value="TreeGrafter"/>
</dbReference>
<dbReference type="GO" id="GO:0000162">
    <property type="term" value="P:L-tryptophan biosynthetic process"/>
    <property type="evidence" value="ECO:0007669"/>
    <property type="project" value="UniProtKB-UniRule"/>
</dbReference>
<dbReference type="CDD" id="cd00331">
    <property type="entry name" value="IGPS"/>
    <property type="match status" value="1"/>
</dbReference>
<dbReference type="FunFam" id="3.20.20.70:FF:000024">
    <property type="entry name" value="Indole-3-glycerol phosphate synthase"/>
    <property type="match status" value="1"/>
</dbReference>
<dbReference type="Gene3D" id="3.20.20.70">
    <property type="entry name" value="Aldolase class I"/>
    <property type="match status" value="1"/>
</dbReference>
<dbReference type="HAMAP" id="MF_00134_B">
    <property type="entry name" value="IGPS_B"/>
    <property type="match status" value="1"/>
</dbReference>
<dbReference type="InterPro" id="IPR013785">
    <property type="entry name" value="Aldolase_TIM"/>
</dbReference>
<dbReference type="InterPro" id="IPR045186">
    <property type="entry name" value="Indole-3-glycerol_P_synth"/>
</dbReference>
<dbReference type="InterPro" id="IPR013798">
    <property type="entry name" value="Indole-3-glycerol_P_synth_dom"/>
</dbReference>
<dbReference type="InterPro" id="IPR001468">
    <property type="entry name" value="Indole-3-GlycerolPSynthase_CS"/>
</dbReference>
<dbReference type="InterPro" id="IPR011060">
    <property type="entry name" value="RibuloseP-bd_barrel"/>
</dbReference>
<dbReference type="NCBIfam" id="NF001371">
    <property type="entry name" value="PRK00278.1-3"/>
    <property type="match status" value="1"/>
</dbReference>
<dbReference type="NCBIfam" id="NF001377">
    <property type="entry name" value="PRK00278.2-4"/>
    <property type="match status" value="1"/>
</dbReference>
<dbReference type="PANTHER" id="PTHR22854:SF2">
    <property type="entry name" value="INDOLE-3-GLYCEROL-PHOSPHATE SYNTHASE"/>
    <property type="match status" value="1"/>
</dbReference>
<dbReference type="PANTHER" id="PTHR22854">
    <property type="entry name" value="TRYPTOPHAN BIOSYNTHESIS PROTEIN"/>
    <property type="match status" value="1"/>
</dbReference>
<dbReference type="Pfam" id="PF00218">
    <property type="entry name" value="IGPS"/>
    <property type="match status" value="1"/>
</dbReference>
<dbReference type="SUPFAM" id="SSF51366">
    <property type="entry name" value="Ribulose-phoshate binding barrel"/>
    <property type="match status" value="1"/>
</dbReference>
<dbReference type="PROSITE" id="PS00614">
    <property type="entry name" value="IGPS"/>
    <property type="match status" value="1"/>
</dbReference>